<evidence type="ECO:0000255" key="1"/>
<evidence type="ECO:0000305" key="2"/>
<gene>
    <name type="ordered locus">RP370</name>
</gene>
<dbReference type="EMBL" id="AJ235271">
    <property type="protein sequence ID" value="CAA14829.1"/>
    <property type="molecule type" value="Genomic_DNA"/>
</dbReference>
<dbReference type="PIR" id="C71694">
    <property type="entry name" value="C71694"/>
</dbReference>
<dbReference type="RefSeq" id="NP_220753.1">
    <property type="nucleotide sequence ID" value="NC_000963.1"/>
</dbReference>
<dbReference type="RefSeq" id="WP_010886277.1">
    <property type="nucleotide sequence ID" value="NC_000963.1"/>
</dbReference>
<dbReference type="STRING" id="272947.gene:17555450"/>
<dbReference type="EnsemblBacteria" id="CAA14829">
    <property type="protein sequence ID" value="CAA14829"/>
    <property type="gene ID" value="CAA14829"/>
</dbReference>
<dbReference type="KEGG" id="rpr:RP370"/>
<dbReference type="PATRIC" id="fig|272947.5.peg.381"/>
<dbReference type="eggNOG" id="COG1495">
    <property type="taxonomic scope" value="Bacteria"/>
</dbReference>
<dbReference type="HOGENOM" id="CLU_098660_0_1_5"/>
<dbReference type="OrthoDB" id="9808637at2"/>
<dbReference type="Proteomes" id="UP000002480">
    <property type="component" value="Chromosome"/>
</dbReference>
<dbReference type="GO" id="GO:0005886">
    <property type="term" value="C:plasma membrane"/>
    <property type="evidence" value="ECO:0007669"/>
    <property type="project" value="UniProtKB-SubCell"/>
</dbReference>
<dbReference type="GO" id="GO:0015035">
    <property type="term" value="F:protein-disulfide reductase activity"/>
    <property type="evidence" value="ECO:0007669"/>
    <property type="project" value="InterPro"/>
</dbReference>
<dbReference type="GO" id="GO:0006457">
    <property type="term" value="P:protein folding"/>
    <property type="evidence" value="ECO:0007669"/>
    <property type="project" value="InterPro"/>
</dbReference>
<dbReference type="Gene3D" id="1.20.1550.10">
    <property type="entry name" value="DsbB-like"/>
    <property type="match status" value="1"/>
</dbReference>
<dbReference type="InterPro" id="IPR003752">
    <property type="entry name" value="DiS_bond_form_DsbB/BdbC"/>
</dbReference>
<dbReference type="InterPro" id="IPR050183">
    <property type="entry name" value="DsbB"/>
</dbReference>
<dbReference type="InterPro" id="IPR023380">
    <property type="entry name" value="DsbB-like_sf"/>
</dbReference>
<dbReference type="InterPro" id="IPR024199">
    <property type="entry name" value="Uncharacterised_DsbB"/>
</dbReference>
<dbReference type="PANTHER" id="PTHR36570">
    <property type="entry name" value="DISULFIDE BOND FORMATION PROTEIN B"/>
    <property type="match status" value="1"/>
</dbReference>
<dbReference type="PANTHER" id="PTHR36570:SF3">
    <property type="entry name" value="DISULFIDE BOND FORMATION PROTEIN B"/>
    <property type="match status" value="1"/>
</dbReference>
<dbReference type="Pfam" id="PF02600">
    <property type="entry name" value="DsbB"/>
    <property type="match status" value="1"/>
</dbReference>
<dbReference type="PIRSF" id="PIRSF033913">
    <property type="entry name" value="S-S_format_DsbB"/>
    <property type="match status" value="1"/>
</dbReference>
<dbReference type="SUPFAM" id="SSF158442">
    <property type="entry name" value="DsbB-like"/>
    <property type="match status" value="1"/>
</dbReference>
<protein>
    <recommendedName>
        <fullName>Uncharacterized protein RP370</fullName>
    </recommendedName>
</protein>
<organism>
    <name type="scientific">Rickettsia prowazekii (strain Madrid E)</name>
    <dbReference type="NCBI Taxonomy" id="272947"/>
    <lineage>
        <taxon>Bacteria</taxon>
        <taxon>Pseudomonadati</taxon>
        <taxon>Pseudomonadota</taxon>
        <taxon>Alphaproteobacteria</taxon>
        <taxon>Rickettsiales</taxon>
        <taxon>Rickettsiaceae</taxon>
        <taxon>Rickettsieae</taxon>
        <taxon>Rickettsia</taxon>
        <taxon>typhus group</taxon>
    </lineage>
</organism>
<sequence>MILNMTINYIKKDRYKVLNLVLITISIIALSTAYIAEYIFHYTPCPLCVYERFPYLMLIKISLTALIIRQLNKYTLILILITILSSCILSTYHSFVERGIVQPSAICSSMIRIPQGLSIQHIKQMFYSQPITSCTKPAIKILGISMTEYNLLLNICLLIFLGLILFYPKSNK</sequence>
<proteinExistence type="predicted"/>
<accession>Q9ZDF9</accession>
<keyword id="KW-1003">Cell membrane</keyword>
<keyword id="KW-0472">Membrane</keyword>
<keyword id="KW-1185">Reference proteome</keyword>
<keyword id="KW-0812">Transmembrane</keyword>
<keyword id="KW-1133">Transmembrane helix</keyword>
<name>Y370_RICPR</name>
<reference key="1">
    <citation type="journal article" date="1998" name="Nature">
        <title>The genome sequence of Rickettsia prowazekii and the origin of mitochondria.</title>
        <authorList>
            <person name="Andersson S.G.E."/>
            <person name="Zomorodipour A."/>
            <person name="Andersson J.O."/>
            <person name="Sicheritz-Ponten T."/>
            <person name="Alsmark U.C.M."/>
            <person name="Podowski R.M."/>
            <person name="Naeslund A.K."/>
            <person name="Eriksson A.-S."/>
            <person name="Winkler H.H."/>
            <person name="Kurland C.G."/>
        </authorList>
    </citation>
    <scope>NUCLEOTIDE SEQUENCE [LARGE SCALE GENOMIC DNA]</scope>
    <source>
        <strain>Madrid E</strain>
    </source>
</reference>
<feature type="chain" id="PRO_0000101359" description="Uncharacterized protein RP370">
    <location>
        <begin position="1"/>
        <end position="172"/>
    </location>
</feature>
<feature type="transmembrane region" description="Helical" evidence="1">
    <location>
        <begin position="20"/>
        <end position="40"/>
    </location>
</feature>
<feature type="transmembrane region" description="Helical" evidence="1">
    <location>
        <begin position="48"/>
        <end position="68"/>
    </location>
</feature>
<feature type="transmembrane region" description="Helical" evidence="1">
    <location>
        <begin position="76"/>
        <end position="96"/>
    </location>
</feature>
<feature type="transmembrane region" description="Helical" evidence="1">
    <location>
        <begin position="146"/>
        <end position="166"/>
    </location>
</feature>
<comment type="subcellular location">
    <subcellularLocation>
        <location evidence="2">Cell membrane</location>
        <topology evidence="2">Multi-pass membrane protein</topology>
    </subcellularLocation>
</comment>